<accession>P78562</accession>
<accession>O00678</accession>
<accession>Q13646</accession>
<accession>Q2M325</accession>
<accession>Q93032</accession>
<accession>Q99827</accession>
<reference key="1">
    <citation type="journal article" date="1997" name="Genome Res.">
        <title>Genomic organization of the human PEX gene mutated in X-linked dominant hypophosphatemic rickets.</title>
        <authorList>
            <person name="Francis F."/>
            <person name="Strom T.M."/>
            <person name="Hennig S."/>
            <person name="Boeddrich A."/>
            <person name="Lorenz B."/>
            <person name="Brandau O."/>
            <person name="Mohnike K.L."/>
            <person name="Cagnoli M."/>
            <person name="Steffens C."/>
            <person name="Klages S."/>
            <person name="Borzym K."/>
            <person name="Pohl T."/>
            <person name="Oudet C.L."/>
            <person name="Econs M.J."/>
            <person name="Rowe P.S.N."/>
            <person name="Reinhardt R."/>
            <person name="Meitinger T."/>
            <person name="Lehrach H."/>
        </authorList>
    </citation>
    <scope>NUCLEOTIDE SEQUENCE [GENOMIC DNA]</scope>
    <scope>VARIANTS XLHRD ARG-85; LEU-534; ARG-579 AND PRO-651</scope>
</reference>
<reference key="2">
    <citation type="journal article" date="1997" name="J. Clin. Invest.">
        <title>Pex/PEX tissue distribution and evidence for a deletion in the 3' region of the Pex gene in X-linked hypophosphatemic mice.</title>
        <authorList>
            <person name="Beck L."/>
            <person name="Soumounou Y."/>
            <person name="Martel J."/>
            <person name="Krishnamurthy G."/>
            <person name="Gauthier C."/>
            <person name="Goodyer C.G."/>
            <person name="Tenenhouse H.S."/>
        </authorList>
    </citation>
    <scope>NUCLEOTIDE SEQUENCE [MRNA]</scope>
    <scope>DEVELOPMENTAL STAGE</scope>
</reference>
<reference key="3">
    <citation type="journal article" date="1997" name="J. Bone Miner. Res.">
        <title>Cloning and sequencing of human PEX from a bone cDNA library: evidence for its developmental stage-specific regulation in osteoblasts.</title>
        <authorList>
            <person name="Guo R."/>
            <person name="Quarles L.D."/>
        </authorList>
    </citation>
    <scope>NUCLEOTIDE SEQUENCE [MRNA]</scope>
    <source>
        <tissue>Bone</tissue>
    </source>
</reference>
<reference key="4">
    <citation type="journal article" date="1997" name="Biochem. Biophys. Res. Commun.">
        <title>Expression and cloning of the human X-linked hypophosphatemia gene cDNA.</title>
        <authorList>
            <person name="Grieff M."/>
            <person name="Mumm S."/>
            <person name="Waeltz P."/>
            <person name="Mazzarella R."/>
            <person name="Whyte M.P."/>
            <person name="Thakker R.V."/>
            <person name="Schlessinger D."/>
        </authorList>
    </citation>
    <scope>NUCLEOTIDE SEQUENCE [MRNA]</scope>
    <scope>TISSUE SPECIFICITY</scope>
    <scope>DEVELOPMENTAL STAGE</scope>
</reference>
<reference key="5">
    <citation type="journal article" date="1998" name="J. Biol. Chem.">
        <title>Cloning of human PEX cDNA. Expression, subcellular localization, and endopeptidase activity.</title>
        <authorList>
            <person name="Lipman M.L."/>
            <person name="Panda D."/>
            <person name="Bennett H.P."/>
            <person name="Henderson J.E."/>
            <person name="Shane E."/>
            <person name="Shen Y."/>
            <person name="Goltzman D."/>
            <person name="Karaplis A.C."/>
        </authorList>
    </citation>
    <scope>NUCLEOTIDE SEQUENCE [MRNA]</scope>
    <scope>FUNCTION</scope>
    <scope>CATALYTIC ACTIVITY</scope>
    <scope>SUBCELLULAR LOCATION</scope>
    <scope>TISSUE SPECIFICITY</scope>
    <scope>DEVELOPMENTAL STAGE</scope>
    <scope>TOPOLOGY</scope>
</reference>
<reference key="6">
    <citation type="journal article" date="1997" name="Am. J. Hum. Genet.">
        <title>Mutational analysis of the PEX gene in patients with X-linked hypophosphatemic rickets.</title>
        <authorList>
            <person name="Holm I.A."/>
            <person name="Huang X."/>
            <person name="Kunkel L.M."/>
        </authorList>
    </citation>
    <scope>NUCLEOTIDE SEQUENCE [GENOMIC DNA]</scope>
    <scope>VARIANTS XLHRD TYR-85; CYS-166; SER-252; ILE-253 AND VAL-579</scope>
</reference>
<reference key="7">
    <citation type="journal article" date="2005" name="Nature">
        <title>The DNA sequence of the human X chromosome.</title>
        <authorList>
            <person name="Ross M.T."/>
            <person name="Grafham D.V."/>
            <person name="Coffey A.J."/>
            <person name="Scherer S."/>
            <person name="McLay K."/>
            <person name="Muzny D."/>
            <person name="Platzer M."/>
            <person name="Howell G.R."/>
            <person name="Burrows C."/>
            <person name="Bird C.P."/>
            <person name="Frankish A."/>
            <person name="Lovell F.L."/>
            <person name="Howe K.L."/>
            <person name="Ashurst J.L."/>
            <person name="Fulton R.S."/>
            <person name="Sudbrak R."/>
            <person name="Wen G."/>
            <person name="Jones M.C."/>
            <person name="Hurles M.E."/>
            <person name="Andrews T.D."/>
            <person name="Scott C.E."/>
            <person name="Searle S."/>
            <person name="Ramser J."/>
            <person name="Whittaker A."/>
            <person name="Deadman R."/>
            <person name="Carter N.P."/>
            <person name="Hunt S.E."/>
            <person name="Chen R."/>
            <person name="Cree A."/>
            <person name="Gunaratne P."/>
            <person name="Havlak P."/>
            <person name="Hodgson A."/>
            <person name="Metzker M.L."/>
            <person name="Richards S."/>
            <person name="Scott G."/>
            <person name="Steffen D."/>
            <person name="Sodergren E."/>
            <person name="Wheeler D.A."/>
            <person name="Worley K.C."/>
            <person name="Ainscough R."/>
            <person name="Ambrose K.D."/>
            <person name="Ansari-Lari M.A."/>
            <person name="Aradhya S."/>
            <person name="Ashwell R.I."/>
            <person name="Babbage A.K."/>
            <person name="Bagguley C.L."/>
            <person name="Ballabio A."/>
            <person name="Banerjee R."/>
            <person name="Barker G.E."/>
            <person name="Barlow K.F."/>
            <person name="Barrett I.P."/>
            <person name="Bates K.N."/>
            <person name="Beare D.M."/>
            <person name="Beasley H."/>
            <person name="Beasley O."/>
            <person name="Beck A."/>
            <person name="Bethel G."/>
            <person name="Blechschmidt K."/>
            <person name="Brady N."/>
            <person name="Bray-Allen S."/>
            <person name="Bridgeman A.M."/>
            <person name="Brown A.J."/>
            <person name="Brown M.J."/>
            <person name="Bonnin D."/>
            <person name="Bruford E.A."/>
            <person name="Buhay C."/>
            <person name="Burch P."/>
            <person name="Burford D."/>
            <person name="Burgess J."/>
            <person name="Burrill W."/>
            <person name="Burton J."/>
            <person name="Bye J.M."/>
            <person name="Carder C."/>
            <person name="Carrel L."/>
            <person name="Chako J."/>
            <person name="Chapman J.C."/>
            <person name="Chavez D."/>
            <person name="Chen E."/>
            <person name="Chen G."/>
            <person name="Chen Y."/>
            <person name="Chen Z."/>
            <person name="Chinault C."/>
            <person name="Ciccodicola A."/>
            <person name="Clark S.Y."/>
            <person name="Clarke G."/>
            <person name="Clee C.M."/>
            <person name="Clegg S."/>
            <person name="Clerc-Blankenburg K."/>
            <person name="Clifford K."/>
            <person name="Cobley V."/>
            <person name="Cole C.G."/>
            <person name="Conquer J.S."/>
            <person name="Corby N."/>
            <person name="Connor R.E."/>
            <person name="David R."/>
            <person name="Davies J."/>
            <person name="Davis C."/>
            <person name="Davis J."/>
            <person name="Delgado O."/>
            <person name="Deshazo D."/>
            <person name="Dhami P."/>
            <person name="Ding Y."/>
            <person name="Dinh H."/>
            <person name="Dodsworth S."/>
            <person name="Draper H."/>
            <person name="Dugan-Rocha S."/>
            <person name="Dunham A."/>
            <person name="Dunn M."/>
            <person name="Durbin K.J."/>
            <person name="Dutta I."/>
            <person name="Eades T."/>
            <person name="Ellwood M."/>
            <person name="Emery-Cohen A."/>
            <person name="Errington H."/>
            <person name="Evans K.L."/>
            <person name="Faulkner L."/>
            <person name="Francis F."/>
            <person name="Frankland J."/>
            <person name="Fraser A.E."/>
            <person name="Galgoczy P."/>
            <person name="Gilbert J."/>
            <person name="Gill R."/>
            <person name="Gloeckner G."/>
            <person name="Gregory S.G."/>
            <person name="Gribble S."/>
            <person name="Griffiths C."/>
            <person name="Grocock R."/>
            <person name="Gu Y."/>
            <person name="Gwilliam R."/>
            <person name="Hamilton C."/>
            <person name="Hart E.A."/>
            <person name="Hawes A."/>
            <person name="Heath P.D."/>
            <person name="Heitmann K."/>
            <person name="Hennig S."/>
            <person name="Hernandez J."/>
            <person name="Hinzmann B."/>
            <person name="Ho S."/>
            <person name="Hoffs M."/>
            <person name="Howden P.J."/>
            <person name="Huckle E.J."/>
            <person name="Hume J."/>
            <person name="Hunt P.J."/>
            <person name="Hunt A.R."/>
            <person name="Isherwood J."/>
            <person name="Jacob L."/>
            <person name="Johnson D."/>
            <person name="Jones S."/>
            <person name="de Jong P.J."/>
            <person name="Joseph S.S."/>
            <person name="Keenan S."/>
            <person name="Kelly S."/>
            <person name="Kershaw J.K."/>
            <person name="Khan Z."/>
            <person name="Kioschis P."/>
            <person name="Klages S."/>
            <person name="Knights A.J."/>
            <person name="Kosiura A."/>
            <person name="Kovar-Smith C."/>
            <person name="Laird G.K."/>
            <person name="Langford C."/>
            <person name="Lawlor S."/>
            <person name="Leversha M."/>
            <person name="Lewis L."/>
            <person name="Liu W."/>
            <person name="Lloyd C."/>
            <person name="Lloyd D.M."/>
            <person name="Loulseged H."/>
            <person name="Loveland J.E."/>
            <person name="Lovell J.D."/>
            <person name="Lozado R."/>
            <person name="Lu J."/>
            <person name="Lyne R."/>
            <person name="Ma J."/>
            <person name="Maheshwari M."/>
            <person name="Matthews L.H."/>
            <person name="McDowall J."/>
            <person name="McLaren S."/>
            <person name="McMurray A."/>
            <person name="Meidl P."/>
            <person name="Meitinger T."/>
            <person name="Milne S."/>
            <person name="Miner G."/>
            <person name="Mistry S.L."/>
            <person name="Morgan M."/>
            <person name="Morris S."/>
            <person name="Mueller I."/>
            <person name="Mullikin J.C."/>
            <person name="Nguyen N."/>
            <person name="Nordsiek G."/>
            <person name="Nyakatura G."/>
            <person name="O'dell C.N."/>
            <person name="Okwuonu G."/>
            <person name="Palmer S."/>
            <person name="Pandian R."/>
            <person name="Parker D."/>
            <person name="Parrish J."/>
            <person name="Pasternak S."/>
            <person name="Patel D."/>
            <person name="Pearce A.V."/>
            <person name="Pearson D.M."/>
            <person name="Pelan S.E."/>
            <person name="Perez L."/>
            <person name="Porter K.M."/>
            <person name="Ramsey Y."/>
            <person name="Reichwald K."/>
            <person name="Rhodes S."/>
            <person name="Ridler K.A."/>
            <person name="Schlessinger D."/>
            <person name="Schueler M.G."/>
            <person name="Sehra H.K."/>
            <person name="Shaw-Smith C."/>
            <person name="Shen H."/>
            <person name="Sheridan E.M."/>
            <person name="Shownkeen R."/>
            <person name="Skuce C.D."/>
            <person name="Smith M.L."/>
            <person name="Sotheran E.C."/>
            <person name="Steingruber H.E."/>
            <person name="Steward C.A."/>
            <person name="Storey R."/>
            <person name="Swann R.M."/>
            <person name="Swarbreck D."/>
            <person name="Tabor P.E."/>
            <person name="Taudien S."/>
            <person name="Taylor T."/>
            <person name="Teague B."/>
            <person name="Thomas K."/>
            <person name="Thorpe A."/>
            <person name="Timms K."/>
            <person name="Tracey A."/>
            <person name="Trevanion S."/>
            <person name="Tromans A.C."/>
            <person name="d'Urso M."/>
            <person name="Verduzco D."/>
            <person name="Villasana D."/>
            <person name="Waldron L."/>
            <person name="Wall M."/>
            <person name="Wang Q."/>
            <person name="Warren J."/>
            <person name="Warry G.L."/>
            <person name="Wei X."/>
            <person name="West A."/>
            <person name="Whitehead S.L."/>
            <person name="Whiteley M.N."/>
            <person name="Wilkinson J.E."/>
            <person name="Willey D.L."/>
            <person name="Williams G."/>
            <person name="Williams L."/>
            <person name="Williamson A."/>
            <person name="Williamson H."/>
            <person name="Wilming L."/>
            <person name="Woodmansey R.L."/>
            <person name="Wray P.W."/>
            <person name="Yen J."/>
            <person name="Zhang J."/>
            <person name="Zhou J."/>
            <person name="Zoghbi H."/>
            <person name="Zorilla S."/>
            <person name="Buck D."/>
            <person name="Reinhardt R."/>
            <person name="Poustka A."/>
            <person name="Rosenthal A."/>
            <person name="Lehrach H."/>
            <person name="Meindl A."/>
            <person name="Minx P.J."/>
            <person name="Hillier L.W."/>
            <person name="Willard H.F."/>
            <person name="Wilson R.K."/>
            <person name="Waterston R.H."/>
            <person name="Rice C.M."/>
            <person name="Vaudin M."/>
            <person name="Coulson A."/>
            <person name="Nelson D.L."/>
            <person name="Weinstock G."/>
            <person name="Sulston J.E."/>
            <person name="Durbin R.M."/>
            <person name="Hubbard T."/>
            <person name="Gibbs R.A."/>
            <person name="Beck S."/>
            <person name="Rogers J."/>
            <person name="Bentley D.R."/>
        </authorList>
    </citation>
    <scope>NUCLEOTIDE SEQUENCE [LARGE SCALE GENOMIC DNA]</scope>
</reference>
<reference key="8">
    <citation type="journal article" date="2004" name="Genome Res.">
        <title>The status, quality, and expansion of the NIH full-length cDNA project: the Mammalian Gene Collection (MGC).</title>
        <authorList>
            <consortium name="The MGC Project Team"/>
        </authorList>
    </citation>
    <scope>NUCLEOTIDE SEQUENCE [LARGE SCALE MRNA]</scope>
    <source>
        <tissue>Brain</tissue>
    </source>
</reference>
<reference key="9">
    <citation type="journal article" date="1995" name="Nat. Genet.">
        <title>A gene (PEX) with homologies to endopeptidases is mutated in patients with X-linked hypophosphatemic rickets.</title>
        <authorList>
            <consortium name="The HYP consortium"/>
            <person name="Francis F."/>
            <person name="Hennig S."/>
            <person name="Korn B."/>
            <person name="Reinhardt R."/>
            <person name="de Jong P."/>
            <person name="Poustka A."/>
            <person name="Lehrach H."/>
            <person name="Rowe P.S.N."/>
            <person name="Goulding J.N."/>
            <person name="Summerfield T."/>
            <person name="Mountford R."/>
            <person name="Read A.P."/>
            <person name="Popowska E."/>
            <person name="Pronicka E."/>
            <person name="Davies K.E."/>
            <person name="Oriordan J.L.H."/>
            <person name="Econs M.J."/>
            <person name="Nesbitt T."/>
            <person name="Drezner M.K."/>
            <person name="Oudet C.L."/>
            <person name="Pannetier S."/>
            <person name="Hanauer A."/>
            <person name="Strom T.M."/>
            <person name="Meindl A."/>
            <person name="Lorenz B."/>
            <person name="Cagnoli M."/>
            <person name="Mohnike K.L."/>
            <person name="Murken J."/>
            <person name="Meitinger T."/>
        </authorList>
    </citation>
    <scope>NUCLEOTIDE SEQUENCE [MRNA] OF 4-641</scope>
</reference>
<reference key="10">
    <citation type="journal article" date="2002" name="Biochem. Biophys. Res. Commun.">
        <title>Inhibition of MEPE cleavage by Phex.</title>
        <authorList>
            <person name="Guo R."/>
            <person name="Rowe P.S."/>
            <person name="Liu S."/>
            <person name="Simpson L.G."/>
            <person name="Xiao Z.S."/>
            <person name="Quarles L.D."/>
        </authorList>
    </citation>
    <scope>FUNCTION</scope>
</reference>
<reference key="11">
    <citation type="journal article" date="2005" name="Bone">
        <title>Surface plasmon resonance (SPR) confirms that MEPE binds to PHEX via the MEPE-ASARM motif: a model for impaired mineralization in X-linked rickets (HYP).</title>
        <authorList>
            <person name="Rowe P.S."/>
            <person name="Garrett I.R."/>
            <person name="Schwarz P.M."/>
            <person name="Carnes D.L."/>
            <person name="Lafer E.M."/>
            <person name="Mundy G.R."/>
            <person name="Gutierrez G.E."/>
        </authorList>
    </citation>
    <scope>COFACTOR</scope>
    <scope>INTERACTION WITH MEPE</scope>
</reference>
<reference key="12">
    <citation type="journal article" date="2008" name="Endocrinology">
        <title>Degradation of MEPE, DMP1, and release of SIBLING ASARM-peptides (minhibins): ASARM-peptide(s) are directly responsible for defective mineralization in HYP.</title>
        <authorList>
            <person name="Martin A."/>
            <person name="David V."/>
            <person name="Laurence J.S."/>
            <person name="Schwarz P.M."/>
            <person name="Lafer E.M."/>
            <person name="Hedge A.M."/>
            <person name="Rowe P.S."/>
        </authorList>
    </citation>
    <scope>FUNCTION</scope>
    <scope>INTERACTION WITH MEPE</scope>
</reference>
<reference key="13">
    <citation type="journal article" date="2008" name="J. Bone Miner. Res.">
        <title>MEPE-ASARM peptides control extracellular matrix mineralization by binding to hydroxyapatite: an inhibition regulated by PHEX cleavage of ASARM.</title>
        <authorList>
            <person name="Addison W.N."/>
            <person name="Nakano Y."/>
            <person name="Loisel T."/>
            <person name="Crine P."/>
            <person name="McKee M.D."/>
        </authorList>
    </citation>
    <scope>FUNCTION</scope>
    <scope>CATALYTIC ACTIVITY</scope>
</reference>
<reference key="14">
    <citation type="journal article" date="1997" name="Hum. Mol. Genet.">
        <title>Distribution of mutations in the PEX gene in families with X-linked hypophosphataemic rickets (HYP).</title>
        <authorList>
            <person name="Rowe P.S.N."/>
            <person name="Oudet C.L."/>
            <person name="Francis F."/>
            <person name="Sinding C."/>
            <person name="Pannetier S."/>
            <person name="Econs M.J."/>
            <person name="Strom T.M."/>
            <person name="Meitinger T."/>
            <person name="Garabedian M."/>
            <person name="David A."/>
            <person name="Macher M.-A."/>
            <person name="Questiaux E."/>
            <person name="Popowska E."/>
            <person name="Pronicka E."/>
            <person name="Read A.P."/>
            <person name="Mokrzycki A."/>
            <person name="Glorieux F.H."/>
            <person name="Drezner M.K."/>
            <person name="Hanauer A."/>
            <person name="Lehrach H."/>
            <person name="Goulding J.N."/>
            <person name="O'Riordan J.L.H."/>
        </authorList>
    </citation>
    <scope>VARIANTS XLHRD SER-77; PRO-138; LEU-534 AND ARG-579</scope>
</reference>
<reference key="15">
    <citation type="journal article" date="1998" name="J. Clin. Endocrinol. Metab.">
        <title>A PHEX gene mutation is responsible for adult-onset vitamin D-resistant hypophosphatemic osteomalacia: evidence that the disorder is not a distinct entity from X-linked hypophosphatemic rickets.</title>
        <authorList>
            <person name="Econs M.J."/>
            <person name="Friedman N.E."/>
            <person name="Rowe P.S.N."/>
            <person name="Speer M.C."/>
            <person name="Francis F."/>
            <person name="Strom T.M."/>
            <person name="Oudet C.L."/>
            <person name="Smith J.A."/>
            <person name="Ninomiya J.T."/>
            <person name="Lee B.E."/>
            <person name="Bergen H."/>
        </authorList>
    </citation>
    <scope>VARIANT XLHRD PRO-555</scope>
</reference>
<reference key="16">
    <citation type="journal article" date="1998" name="J. Clin. Endocrinol. Metab.">
        <title>Mutational analysis of PHEX gene in X-linked hypophosphatemia.</title>
        <authorList>
            <person name="Dixon P.H."/>
            <person name="Christie P.T."/>
            <person name="Wooding C."/>
            <person name="Trump D."/>
            <person name="Grieff M."/>
            <person name="Holm I.A."/>
            <person name="Gertner J.M."/>
            <person name="Schmidtke J."/>
            <person name="Shah B."/>
            <person name="Shaw N."/>
            <person name="Smith C."/>
            <person name="Tau C."/>
            <person name="Schlessinger D."/>
            <person name="Whyte M.P."/>
            <person name="Thakker R.V."/>
        </authorList>
    </citation>
    <scope>VARIANTS XLHRD PHE-317; LEU-534; ARG-579; ARG-621; ASN-680 DEL; THR-720; TYR-731 AND ARG-749</scope>
</reference>
<reference key="17">
    <citation type="journal article" date="1999" name="Eur. J. Hum. Genet.">
        <title>Non-random distribution of mutations in the PHEX gene, and under-detected missense mutations at non-conserved residues.</title>
        <authorList>
            <person name="Filisetti D."/>
            <person name="Ostermann G."/>
            <person name="von Bredow M."/>
            <person name="Strom T.M."/>
            <person name="Filler G."/>
            <person name="Ehrich J."/>
            <person name="Pannetier S."/>
            <person name="Garnier J.-M."/>
            <person name="Rowe P.S.N."/>
            <person name="Francis F."/>
            <person name="Julienne A."/>
            <person name="Hanauer A."/>
            <person name="Econs M.J."/>
            <person name="Oudet C.L."/>
        </authorList>
    </citation>
    <scope>VARIANTS XLHRD SER-80; PHE-142; GLY-237; CYS-530; ASP-573; SER-733 AND TRP-746</scope>
</reference>
<reference key="18">
    <citation type="journal article" date="2000" name="Hum. Mutat.">
        <title>Identification of fifteen novel PHEX gene mutations in Finnish patients with hypophosphatemic rickets.</title>
        <authorList>
            <person name="Tyynismaa H."/>
            <person name="Kaitila I."/>
            <person name="Naentoe-Salonen K."/>
            <person name="Ala-Houhala M."/>
            <person name="Alitalo T."/>
        </authorList>
    </citation>
    <scope>VARIANTS XLHRD PHE-85; PRO-141; VAL-341 DEL; PRO-567; LYS-680 AND TYR-693</scope>
</reference>
<reference key="19">
    <citation type="journal article" date="2000" name="Pediatr. Res.">
        <title>Three novel PHEX gene mutations in Japanese patients with X-linked hypophosphatemic rickets.</title>
        <authorList>
            <person name="Sato K."/>
            <person name="Tajima T."/>
            <person name="Nakae J."/>
            <person name="Adachi M."/>
            <person name="Asakura Y."/>
            <person name="Tachibana K."/>
            <person name="Suwa S."/>
            <person name="Katsumata N."/>
            <person name="Tanaka T."/>
            <person name="Hayashi Y."/>
            <person name="Abe S."/>
            <person name="Murashita M."/>
            <person name="Okuhara K."/>
            <person name="Shinohara N."/>
            <person name="Fujieda K."/>
        </authorList>
    </citation>
    <scope>VARIANTS XLHRD ARG-160 AND ASN-444 INS</scope>
</reference>
<gene>
    <name type="primary">PHEX</name>
    <name type="synonym">PEX</name>
</gene>
<organism>
    <name type="scientific">Homo sapiens</name>
    <name type="common">Human</name>
    <dbReference type="NCBI Taxonomy" id="9606"/>
    <lineage>
        <taxon>Eukaryota</taxon>
        <taxon>Metazoa</taxon>
        <taxon>Chordata</taxon>
        <taxon>Craniata</taxon>
        <taxon>Vertebrata</taxon>
        <taxon>Euteleostomi</taxon>
        <taxon>Mammalia</taxon>
        <taxon>Eutheria</taxon>
        <taxon>Euarchontoglires</taxon>
        <taxon>Primates</taxon>
        <taxon>Haplorrhini</taxon>
        <taxon>Catarrhini</taxon>
        <taxon>Hominidae</taxon>
        <taxon>Homo</taxon>
    </lineage>
</organism>
<keyword id="KW-0091">Biomineralization</keyword>
<keyword id="KW-1003">Cell membrane</keyword>
<keyword id="KW-0225">Disease variant</keyword>
<keyword id="KW-1015">Disulfide bond</keyword>
<keyword id="KW-0325">Glycoprotein</keyword>
<keyword id="KW-0378">Hydrolase</keyword>
<keyword id="KW-0472">Membrane</keyword>
<keyword id="KW-0479">Metal-binding</keyword>
<keyword id="KW-0482">Metalloprotease</keyword>
<keyword id="KW-0645">Protease</keyword>
<keyword id="KW-1267">Proteomics identification</keyword>
<keyword id="KW-1185">Reference proteome</keyword>
<keyword id="KW-0735">Signal-anchor</keyword>
<keyword id="KW-0812">Transmembrane</keyword>
<keyword id="KW-1133">Transmembrane helix</keyword>
<keyword id="KW-0862">Zinc</keyword>
<evidence type="ECO:0000250" key="1">
    <source>
        <dbReference type="UniProtKB" id="P70669"/>
    </source>
</evidence>
<evidence type="ECO:0000255" key="2"/>
<evidence type="ECO:0000255" key="3">
    <source>
        <dbReference type="PROSITE-ProRule" id="PRU01233"/>
    </source>
</evidence>
<evidence type="ECO:0000255" key="4">
    <source>
        <dbReference type="PROSITE-ProRule" id="PRU10095"/>
    </source>
</evidence>
<evidence type="ECO:0000269" key="5">
    <source>
    </source>
</evidence>
<evidence type="ECO:0000269" key="6">
    <source>
    </source>
</evidence>
<evidence type="ECO:0000269" key="7">
    <source>
    </source>
</evidence>
<evidence type="ECO:0000269" key="8">
    <source>
    </source>
</evidence>
<evidence type="ECO:0000269" key="9">
    <source>
    </source>
</evidence>
<evidence type="ECO:0000269" key="10">
    <source>
    </source>
</evidence>
<evidence type="ECO:0000269" key="11">
    <source>
    </source>
</evidence>
<evidence type="ECO:0000269" key="12">
    <source>
    </source>
</evidence>
<evidence type="ECO:0000269" key="13">
    <source>
    </source>
</evidence>
<evidence type="ECO:0000269" key="14">
    <source>
    </source>
</evidence>
<evidence type="ECO:0000269" key="15">
    <source>
    </source>
</evidence>
<evidence type="ECO:0000269" key="16">
    <source>
    </source>
</evidence>
<evidence type="ECO:0000269" key="17">
    <source>
    </source>
</evidence>
<evidence type="ECO:0000269" key="18">
    <source>
    </source>
</evidence>
<evidence type="ECO:0000269" key="19">
    <source>
    </source>
</evidence>
<evidence type="ECO:0000305" key="20"/>
<dbReference type="EC" id="3.4.24.-" evidence="11 17"/>
<dbReference type="EMBL" id="Y08111">
    <property type="protein sequence ID" value="CAA69326.1"/>
    <property type="molecule type" value="Genomic_DNA"/>
</dbReference>
<dbReference type="EMBL" id="Y08112">
    <property type="protein sequence ID" value="CAA69326.1"/>
    <property type="status" value="JOINED"/>
    <property type="molecule type" value="Genomic_DNA"/>
</dbReference>
<dbReference type="EMBL" id="Y08113">
    <property type="protein sequence ID" value="CAA69326.1"/>
    <property type="status" value="JOINED"/>
    <property type="molecule type" value="Genomic_DNA"/>
</dbReference>
<dbReference type="EMBL" id="Y08114">
    <property type="protein sequence ID" value="CAA69326.1"/>
    <property type="status" value="JOINED"/>
    <property type="molecule type" value="Genomic_DNA"/>
</dbReference>
<dbReference type="EMBL" id="Y08115">
    <property type="protein sequence ID" value="CAA69326.1"/>
    <property type="status" value="JOINED"/>
    <property type="molecule type" value="Genomic_DNA"/>
</dbReference>
<dbReference type="EMBL" id="Y08116">
    <property type="protein sequence ID" value="CAA69326.1"/>
    <property type="status" value="JOINED"/>
    <property type="molecule type" value="Genomic_DNA"/>
</dbReference>
<dbReference type="EMBL" id="Y08117">
    <property type="protein sequence ID" value="CAA69326.1"/>
    <property type="status" value="JOINED"/>
    <property type="molecule type" value="Genomic_DNA"/>
</dbReference>
<dbReference type="EMBL" id="Y08118">
    <property type="protein sequence ID" value="CAA69326.1"/>
    <property type="status" value="JOINED"/>
    <property type="molecule type" value="Genomic_DNA"/>
</dbReference>
<dbReference type="EMBL" id="Y08119">
    <property type="protein sequence ID" value="CAA69326.1"/>
    <property type="status" value="JOINED"/>
    <property type="molecule type" value="Genomic_DNA"/>
</dbReference>
<dbReference type="EMBL" id="Y08120">
    <property type="protein sequence ID" value="CAA69326.1"/>
    <property type="status" value="JOINED"/>
    <property type="molecule type" value="Genomic_DNA"/>
</dbReference>
<dbReference type="EMBL" id="Y08121">
    <property type="protein sequence ID" value="CAA69326.1"/>
    <property type="status" value="JOINED"/>
    <property type="molecule type" value="Genomic_DNA"/>
</dbReference>
<dbReference type="EMBL" id="Y08122">
    <property type="protein sequence ID" value="CAA69326.1"/>
    <property type="status" value="JOINED"/>
    <property type="molecule type" value="Genomic_DNA"/>
</dbReference>
<dbReference type="EMBL" id="Y08123">
    <property type="protein sequence ID" value="CAA69326.1"/>
    <property type="status" value="JOINED"/>
    <property type="molecule type" value="Genomic_DNA"/>
</dbReference>
<dbReference type="EMBL" id="Y08124">
    <property type="protein sequence ID" value="CAA69326.1"/>
    <property type="status" value="JOINED"/>
    <property type="molecule type" value="Genomic_DNA"/>
</dbReference>
<dbReference type="EMBL" id="Y08125">
    <property type="protein sequence ID" value="CAA69326.1"/>
    <property type="status" value="JOINED"/>
    <property type="molecule type" value="Genomic_DNA"/>
</dbReference>
<dbReference type="EMBL" id="Y08126">
    <property type="protein sequence ID" value="CAA69326.1"/>
    <property type="status" value="JOINED"/>
    <property type="molecule type" value="Genomic_DNA"/>
</dbReference>
<dbReference type="EMBL" id="Y08127">
    <property type="protein sequence ID" value="CAA69326.1"/>
    <property type="status" value="JOINED"/>
    <property type="molecule type" value="Genomic_DNA"/>
</dbReference>
<dbReference type="EMBL" id="Y08128">
    <property type="protein sequence ID" value="CAA69326.1"/>
    <property type="status" value="JOINED"/>
    <property type="molecule type" value="Genomic_DNA"/>
</dbReference>
<dbReference type="EMBL" id="Y08129">
    <property type="protein sequence ID" value="CAA69326.1"/>
    <property type="status" value="JOINED"/>
    <property type="molecule type" value="Genomic_DNA"/>
</dbReference>
<dbReference type="EMBL" id="Y08130">
    <property type="protein sequence ID" value="CAA69326.1"/>
    <property type="status" value="JOINED"/>
    <property type="molecule type" value="Genomic_DNA"/>
</dbReference>
<dbReference type="EMBL" id="Y08131">
    <property type="protein sequence ID" value="CAA69326.1"/>
    <property type="status" value="JOINED"/>
    <property type="molecule type" value="Genomic_DNA"/>
</dbReference>
<dbReference type="EMBL" id="Y08132">
    <property type="protein sequence ID" value="CAA69326.1"/>
    <property type="status" value="JOINED"/>
    <property type="molecule type" value="Genomic_DNA"/>
</dbReference>
<dbReference type="EMBL" id="U75645">
    <property type="protein sequence ID" value="AAB47749.1"/>
    <property type="molecule type" value="mRNA"/>
</dbReference>
<dbReference type="EMBL" id="U87284">
    <property type="protein sequence ID" value="AAB47562.1"/>
    <property type="molecule type" value="mRNA"/>
</dbReference>
<dbReference type="EMBL" id="AD000712">
    <property type="protein sequence ID" value="AAB51604.1"/>
    <property type="molecule type" value="mRNA"/>
</dbReference>
<dbReference type="EMBL" id="AH004966">
    <property type="protein sequence ID" value="AAB42219.1"/>
    <property type="molecule type" value="Genomic_DNA"/>
</dbReference>
<dbReference type="EMBL" id="U82970">
    <property type="protein sequence ID" value="AAC24487.1"/>
    <property type="molecule type" value="mRNA"/>
</dbReference>
<dbReference type="EMBL" id="U73024">
    <property type="protein sequence ID" value="AAD08630.1"/>
    <property type="molecule type" value="Genomic_DNA"/>
</dbReference>
<dbReference type="EMBL" id="Y10196">
    <property type="protein sequence ID" value="CAA71258.1"/>
    <property type="molecule type" value="Genomic_DNA"/>
</dbReference>
<dbReference type="EMBL" id="BC105057">
    <property type="protein sequence ID" value="AAI05058.1"/>
    <property type="molecule type" value="mRNA"/>
</dbReference>
<dbReference type="EMBL" id="BC105059">
    <property type="protein sequence ID" value="AAI05060.1"/>
    <property type="molecule type" value="mRNA"/>
</dbReference>
<dbReference type="EMBL" id="U60475">
    <property type="protein sequence ID" value="AAC50552.1"/>
    <property type="molecule type" value="mRNA"/>
</dbReference>
<dbReference type="CCDS" id="CCDS14204.1"/>
<dbReference type="RefSeq" id="NP_000435.3">
    <property type="nucleotide sequence ID" value="NM_000444.5"/>
</dbReference>
<dbReference type="RefSeq" id="NP_001269683.1">
    <property type="nucleotide sequence ID" value="NM_001282754.1"/>
</dbReference>
<dbReference type="SMR" id="P78562"/>
<dbReference type="BioGRID" id="111270">
    <property type="interactions" value="4"/>
</dbReference>
<dbReference type="FunCoup" id="P78562">
    <property type="interactions" value="29"/>
</dbReference>
<dbReference type="IntAct" id="P78562">
    <property type="interactions" value="3"/>
</dbReference>
<dbReference type="STRING" id="9606.ENSP00000368682"/>
<dbReference type="MEROPS" id="M13.091"/>
<dbReference type="GlyCosmos" id="P78562">
    <property type="glycosylation" value="8 sites, No reported glycans"/>
</dbReference>
<dbReference type="GlyGen" id="P78562">
    <property type="glycosylation" value="8 sites, 2 N-linked glycans (1 site)"/>
</dbReference>
<dbReference type="iPTMnet" id="P78562"/>
<dbReference type="PhosphoSitePlus" id="P78562"/>
<dbReference type="BioMuta" id="PHEX"/>
<dbReference type="DMDM" id="2499917"/>
<dbReference type="jPOST" id="P78562"/>
<dbReference type="MassIVE" id="P78562"/>
<dbReference type="PaxDb" id="9606-ENSP00000368682"/>
<dbReference type="PeptideAtlas" id="P78562"/>
<dbReference type="ProteomicsDB" id="57655"/>
<dbReference type="Antibodypedia" id="24481">
    <property type="antibodies" value="132 antibodies from 26 providers"/>
</dbReference>
<dbReference type="DNASU" id="5251"/>
<dbReference type="Ensembl" id="ENST00000379374.5">
    <property type="protein sequence ID" value="ENSP00000368682.4"/>
    <property type="gene ID" value="ENSG00000102174.10"/>
</dbReference>
<dbReference type="GeneID" id="5251"/>
<dbReference type="KEGG" id="hsa:5251"/>
<dbReference type="MANE-Select" id="ENST00000379374.5">
    <property type="protein sequence ID" value="ENSP00000368682.4"/>
    <property type="RefSeq nucleotide sequence ID" value="NM_000444.6"/>
    <property type="RefSeq protein sequence ID" value="NP_000435.3"/>
</dbReference>
<dbReference type="UCSC" id="uc004dah.5">
    <property type="organism name" value="human"/>
</dbReference>
<dbReference type="AGR" id="HGNC:8918"/>
<dbReference type="CTD" id="5251"/>
<dbReference type="DisGeNET" id="5251"/>
<dbReference type="GeneCards" id="PHEX"/>
<dbReference type="GeneReviews" id="PHEX"/>
<dbReference type="HGNC" id="HGNC:8918">
    <property type="gene designation" value="PHEX"/>
</dbReference>
<dbReference type="HPA" id="ENSG00000102174">
    <property type="expression patterns" value="Tissue enhanced (ovary)"/>
</dbReference>
<dbReference type="MalaCards" id="PHEX"/>
<dbReference type="MIM" id="300550">
    <property type="type" value="gene"/>
</dbReference>
<dbReference type="MIM" id="307800">
    <property type="type" value="phenotype"/>
</dbReference>
<dbReference type="neXtProt" id="NX_P78562"/>
<dbReference type="OpenTargets" id="ENSG00000102174"/>
<dbReference type="Orphanet" id="89936">
    <property type="disease" value="X-linked hypophosphatemia"/>
</dbReference>
<dbReference type="PharmGKB" id="PA33258"/>
<dbReference type="VEuPathDB" id="HostDB:ENSG00000102174"/>
<dbReference type="eggNOG" id="KOG3624">
    <property type="taxonomic scope" value="Eukaryota"/>
</dbReference>
<dbReference type="GeneTree" id="ENSGT00940000157313"/>
<dbReference type="HOGENOM" id="CLU_006187_4_1_1"/>
<dbReference type="InParanoid" id="P78562"/>
<dbReference type="OMA" id="QAKPEYC"/>
<dbReference type="OrthoDB" id="6475849at2759"/>
<dbReference type="PAN-GO" id="P78562">
    <property type="GO annotations" value="3 GO annotations based on evolutionary models"/>
</dbReference>
<dbReference type="PhylomeDB" id="P78562"/>
<dbReference type="TreeFam" id="TF315192"/>
<dbReference type="BRENDA" id="3.4.24.B15">
    <property type="organism ID" value="2681"/>
</dbReference>
<dbReference type="PathwayCommons" id="P78562"/>
<dbReference type="SignaLink" id="P78562"/>
<dbReference type="BioGRID-ORCS" id="5251">
    <property type="hits" value="19 hits in 771 CRISPR screens"/>
</dbReference>
<dbReference type="ChiTaRS" id="PHEX">
    <property type="organism name" value="human"/>
</dbReference>
<dbReference type="GeneWiki" id="PHEX"/>
<dbReference type="GenomeRNAi" id="5251"/>
<dbReference type="Pharos" id="P78562">
    <property type="development level" value="Tbio"/>
</dbReference>
<dbReference type="PRO" id="PR:P78562"/>
<dbReference type="Proteomes" id="UP000005640">
    <property type="component" value="Chromosome X"/>
</dbReference>
<dbReference type="RNAct" id="P78562">
    <property type="molecule type" value="protein"/>
</dbReference>
<dbReference type="Bgee" id="ENSG00000102174">
    <property type="expression patterns" value="Expressed in secondary oocyte and 91 other cell types or tissues"/>
</dbReference>
<dbReference type="GO" id="GO:0005783">
    <property type="term" value="C:endoplasmic reticulum"/>
    <property type="evidence" value="ECO:0007669"/>
    <property type="project" value="Ensembl"/>
</dbReference>
<dbReference type="GO" id="GO:0005794">
    <property type="term" value="C:Golgi apparatus"/>
    <property type="evidence" value="ECO:0007669"/>
    <property type="project" value="Ensembl"/>
</dbReference>
<dbReference type="GO" id="GO:0043231">
    <property type="term" value="C:intracellular membrane-bounded organelle"/>
    <property type="evidence" value="ECO:0000314"/>
    <property type="project" value="HPA"/>
</dbReference>
<dbReference type="GO" id="GO:0048471">
    <property type="term" value="C:perinuclear region of cytoplasm"/>
    <property type="evidence" value="ECO:0007669"/>
    <property type="project" value="Ensembl"/>
</dbReference>
<dbReference type="GO" id="GO:0005886">
    <property type="term" value="C:plasma membrane"/>
    <property type="evidence" value="ECO:0000314"/>
    <property type="project" value="HPA"/>
</dbReference>
<dbReference type="GO" id="GO:0004222">
    <property type="term" value="F:metalloendopeptidase activity"/>
    <property type="evidence" value="ECO:0000318"/>
    <property type="project" value="GO_Central"/>
</dbReference>
<dbReference type="GO" id="GO:0008270">
    <property type="term" value="F:zinc ion binding"/>
    <property type="evidence" value="ECO:0000304"/>
    <property type="project" value="ProtInc"/>
</dbReference>
<dbReference type="GO" id="GO:0060348">
    <property type="term" value="P:bone development"/>
    <property type="evidence" value="ECO:0007669"/>
    <property type="project" value="Ensembl"/>
</dbReference>
<dbReference type="GO" id="GO:0030282">
    <property type="term" value="P:bone mineralization"/>
    <property type="evidence" value="ECO:0007669"/>
    <property type="project" value="Ensembl"/>
</dbReference>
<dbReference type="GO" id="GO:0007267">
    <property type="term" value="P:cell-cell signaling"/>
    <property type="evidence" value="ECO:0000304"/>
    <property type="project" value="ProtInc"/>
</dbReference>
<dbReference type="GO" id="GO:0071374">
    <property type="term" value="P:cellular response to parathyroid hormone stimulus"/>
    <property type="evidence" value="ECO:0007669"/>
    <property type="project" value="Ensembl"/>
</dbReference>
<dbReference type="GO" id="GO:0071305">
    <property type="term" value="P:cellular response to vitamin D"/>
    <property type="evidence" value="ECO:0007669"/>
    <property type="project" value="Ensembl"/>
</dbReference>
<dbReference type="GO" id="GO:0030324">
    <property type="term" value="P:lung development"/>
    <property type="evidence" value="ECO:0007669"/>
    <property type="project" value="Ensembl"/>
</dbReference>
<dbReference type="GO" id="GO:0042476">
    <property type="term" value="P:odontogenesis"/>
    <property type="evidence" value="ECO:0007669"/>
    <property type="project" value="Ensembl"/>
</dbReference>
<dbReference type="GO" id="GO:0019637">
    <property type="term" value="P:organophosphate metabolic process"/>
    <property type="evidence" value="ECO:0007669"/>
    <property type="project" value="Ensembl"/>
</dbReference>
<dbReference type="GO" id="GO:0036211">
    <property type="term" value="P:protein modification process"/>
    <property type="evidence" value="ECO:0000304"/>
    <property type="project" value="ProtInc"/>
</dbReference>
<dbReference type="GO" id="GO:0016485">
    <property type="term" value="P:protein processing"/>
    <property type="evidence" value="ECO:0000318"/>
    <property type="project" value="GO_Central"/>
</dbReference>
<dbReference type="GO" id="GO:0006508">
    <property type="term" value="P:proteolysis"/>
    <property type="evidence" value="ECO:0000314"/>
    <property type="project" value="UniProtKB"/>
</dbReference>
<dbReference type="GO" id="GO:0060416">
    <property type="term" value="P:response to growth hormone"/>
    <property type="evidence" value="ECO:0007669"/>
    <property type="project" value="Ensembl"/>
</dbReference>
<dbReference type="GO" id="GO:1990418">
    <property type="term" value="P:response to insulin-like growth factor stimulus"/>
    <property type="evidence" value="ECO:0007669"/>
    <property type="project" value="Ensembl"/>
</dbReference>
<dbReference type="GO" id="GO:1904383">
    <property type="term" value="P:response to sodium phosphate"/>
    <property type="evidence" value="ECO:0007669"/>
    <property type="project" value="Ensembl"/>
</dbReference>
<dbReference type="GO" id="GO:0001501">
    <property type="term" value="P:skeletal system development"/>
    <property type="evidence" value="ECO:0000304"/>
    <property type="project" value="ProtInc"/>
</dbReference>
<dbReference type="CDD" id="cd08662">
    <property type="entry name" value="M13"/>
    <property type="match status" value="1"/>
</dbReference>
<dbReference type="Gene3D" id="3.40.390.10">
    <property type="entry name" value="Collagenase (Catalytic Domain)"/>
    <property type="match status" value="1"/>
</dbReference>
<dbReference type="Gene3D" id="1.10.1380.10">
    <property type="entry name" value="Neutral endopeptidase , domain2"/>
    <property type="match status" value="1"/>
</dbReference>
<dbReference type="InterPro" id="IPR024079">
    <property type="entry name" value="MetalloPept_cat_dom_sf"/>
</dbReference>
<dbReference type="InterPro" id="IPR000718">
    <property type="entry name" value="Peptidase_M13"/>
</dbReference>
<dbReference type="InterPro" id="IPR018497">
    <property type="entry name" value="Peptidase_M13_C"/>
</dbReference>
<dbReference type="InterPro" id="IPR042089">
    <property type="entry name" value="Peptidase_M13_dom_2"/>
</dbReference>
<dbReference type="InterPro" id="IPR008753">
    <property type="entry name" value="Peptidase_M13_N"/>
</dbReference>
<dbReference type="PANTHER" id="PTHR11733:SF133">
    <property type="entry name" value="PHOSPHATE-REGULATING NEUTRAL ENDOPEPTIDASE PHEX"/>
    <property type="match status" value="1"/>
</dbReference>
<dbReference type="PANTHER" id="PTHR11733">
    <property type="entry name" value="ZINC METALLOPROTEASE FAMILY M13 NEPRILYSIN-RELATED"/>
    <property type="match status" value="1"/>
</dbReference>
<dbReference type="Pfam" id="PF01431">
    <property type="entry name" value="Peptidase_M13"/>
    <property type="match status" value="1"/>
</dbReference>
<dbReference type="Pfam" id="PF05649">
    <property type="entry name" value="Peptidase_M13_N"/>
    <property type="match status" value="1"/>
</dbReference>
<dbReference type="PRINTS" id="PR00786">
    <property type="entry name" value="NEPRILYSIN"/>
</dbReference>
<dbReference type="SUPFAM" id="SSF55486">
    <property type="entry name" value="Metalloproteases ('zincins'), catalytic domain"/>
    <property type="match status" value="1"/>
</dbReference>
<dbReference type="PROSITE" id="PS51885">
    <property type="entry name" value="NEPRILYSIN"/>
    <property type="match status" value="1"/>
</dbReference>
<dbReference type="PROSITE" id="PS00142">
    <property type="entry name" value="ZINC_PROTEASE"/>
    <property type="match status" value="1"/>
</dbReference>
<name>PHEX_HUMAN</name>
<comment type="function">
    <text evidence="1 8 10 11">Peptidase that cleaves SIBLING (small integrin-binding ligand, N-linked glycoprotein)-derived ASARM peptides, thus regulating their biological activity (PubMed:15664000, PubMed:18162525, PubMed:18597632, PubMed:9593714). Cleaves ASARM peptides between Ser and Glu or Asp residues (PubMed:18597632). Regulates osteogenic cell differentiation and bone mineralization through the cleavage of the MEPE-derived ASARM peptide (PubMed:18597632). Promotes dentin mineralization and renal phosphate reabsorption by cleaving DMP1- and MEPE-derived ASARM peptides (PubMed:18162525, PubMed:18597632). Inhibits the cleavage of MEPE by CTSB/cathepsin B thus preventing MEPE degradation (PubMed:12220505).</text>
</comment>
<comment type="cofactor">
    <cofactor evidence="9">
        <name>Zn(2+)</name>
        <dbReference type="ChEBI" id="CHEBI:29105"/>
    </cofactor>
    <text evidence="9">Binds 1 zinc ion per subunit.</text>
</comment>
<comment type="subunit">
    <text evidence="9 10">Interacts with MEPE; the interaction is zinc-dependent (via ASARM motif).</text>
</comment>
<comment type="interaction">
    <interactant intactId="EBI-2827676">
        <id>P78562</id>
    </interactant>
    <interactant intactId="EBI-1753293">
        <id>Q9NQ76</id>
        <label>MEPE</label>
    </interactant>
    <organismsDiffer>false</organismsDiffer>
    <experiments>2</experiments>
</comment>
<comment type="subcellular location">
    <subcellularLocation>
        <location evidence="17">Cell membrane</location>
        <topology evidence="17">Single-pass type II membrane protein</topology>
    </subcellularLocation>
</comment>
<comment type="tissue specificity">
    <text evidence="12">Specifically expressed in ovary (PubMed:9070861). Expressed at low levels in kidney (PubMed:9070861).</text>
</comment>
<comment type="developmental stage">
    <text evidence="12 13 17">Expressed in fetal lung (PubMed:9070861, PubMed:9077527). Expressed in fetal calvaria and to a lesser extent in fetal kidney and skeletal muscles (PubMed:9077527, PubMed:9593714).</text>
</comment>
<comment type="disease" evidence="5 6 7 14 15 16 18 19">
    <disease id="DI-02447">
        <name>Hypophosphatemic rickets, X-linked dominant</name>
        <acronym>XLHRD</acronym>
        <description>A disorder characterized by impaired phosphate uptake in the kidney, which is likely to be caused by abnormal regulation of sodium phosphate cotransport in the proximal tubules. Clinical manifestations include skeletal deformities, growth failure, craniosynostosis, paravertebral calcifications, pseudofractures in lower extremities, and muscular hypotonia with onset in early childhood. X-linked hypophosphatemic rickets is the most common form of hypophosphatemia with an incidence of 1 in 20000.</description>
        <dbReference type="MIM" id="307800"/>
    </disease>
    <text>The disease is caused by variants affecting the gene represented in this entry.</text>
</comment>
<comment type="similarity">
    <text evidence="3 20">Belongs to the peptidase M13 family.</text>
</comment>
<feature type="chain" id="PRO_0000078228" description="Phosphate-regulating neutral endopeptidase PHEX">
    <location>
        <begin position="1"/>
        <end position="749"/>
    </location>
</feature>
<feature type="topological domain" description="Cytoplasmic" evidence="17">
    <location>
        <begin position="1"/>
        <end position="20"/>
    </location>
</feature>
<feature type="transmembrane region" description="Helical; Signal-anchor for type II membrane protein" evidence="17">
    <location>
        <begin position="21"/>
        <end position="41"/>
    </location>
</feature>
<feature type="topological domain" description="Extracellular" evidence="17">
    <location>
        <begin position="42"/>
        <end position="641"/>
    </location>
</feature>
<feature type="domain" description="Peptidase M13" evidence="3">
    <location>
        <begin position="53"/>
        <end position="749"/>
    </location>
</feature>
<feature type="active site" evidence="3 4">
    <location>
        <position position="581"/>
    </location>
</feature>
<feature type="active site" description="Proton donor" evidence="3">
    <location>
        <position position="646"/>
    </location>
</feature>
<feature type="binding site" evidence="3 4">
    <location>
        <position position="580"/>
    </location>
    <ligand>
        <name>Zn(2+)</name>
        <dbReference type="ChEBI" id="CHEBI:29105"/>
        <note>catalytic</note>
    </ligand>
</feature>
<feature type="binding site" evidence="3 4">
    <location>
        <position position="584"/>
    </location>
    <ligand>
        <name>Zn(2+)</name>
        <dbReference type="ChEBI" id="CHEBI:29105"/>
        <note>catalytic</note>
    </ligand>
</feature>
<feature type="binding site" evidence="3">
    <location>
        <position position="642"/>
    </location>
    <ligand>
        <name>Zn(2+)</name>
        <dbReference type="ChEBI" id="CHEBI:29105"/>
        <note>catalytic</note>
    </ligand>
</feature>
<feature type="glycosylation site" description="N-linked (GlcNAc...) asparagine" evidence="2">
    <location>
        <position position="71"/>
    </location>
</feature>
<feature type="glycosylation site" description="N-linked (GlcNAc...) asparagine" evidence="2">
    <location>
        <position position="238"/>
    </location>
</feature>
<feature type="glycosylation site" description="N-linked (GlcNAc...) asparagine" evidence="2">
    <location>
        <position position="263"/>
    </location>
</feature>
<feature type="glycosylation site" description="N-linked (GlcNAc...) asparagine" evidence="2">
    <location>
        <position position="290"/>
    </location>
</feature>
<feature type="glycosylation site" description="N-linked (GlcNAc...) asparagine" evidence="2">
    <location>
        <position position="301"/>
    </location>
</feature>
<feature type="glycosylation site" description="N-linked (GlcNAc...) asparagine" evidence="2">
    <location>
        <position position="377"/>
    </location>
</feature>
<feature type="glycosylation site" description="N-linked (GlcNAc...) asparagine" evidence="2">
    <location>
        <position position="484"/>
    </location>
</feature>
<feature type="glycosylation site" description="N-linked (GlcNAc...) asparagine" evidence="2">
    <location>
        <position position="736"/>
    </location>
</feature>
<feature type="disulfide bond" evidence="3">
    <location>
        <begin position="54"/>
        <end position="59"/>
    </location>
</feature>
<feature type="disulfide bond" evidence="3">
    <location>
        <begin position="77"/>
        <end position="733"/>
    </location>
</feature>
<feature type="disulfide bond" evidence="3">
    <location>
        <begin position="85"/>
        <end position="693"/>
    </location>
</feature>
<feature type="disulfide bond" evidence="3">
    <location>
        <begin position="142"/>
        <end position="406"/>
    </location>
</feature>
<feature type="disulfide bond" evidence="3">
    <location>
        <begin position="617"/>
        <end position="746"/>
    </location>
</feature>
<feature type="sequence variant" id="VAR_006738" description="In XLHRD; dbSNP:rs2146987697 and dbSNP:rs1556014263." evidence="14">
    <original>C</original>
    <variation>S</variation>
    <location>
        <position position="77"/>
    </location>
</feature>
<feature type="sequence variant" id="VAR_010616" description="In XLHRD." evidence="5">
    <original>F</original>
    <variation>S</variation>
    <location>
        <position position="80"/>
    </location>
</feature>
<feature type="sequence variant" id="VAR_010617" description="In XLHRD; dbSNP:rs137853269." evidence="6">
    <original>C</original>
    <variation>F</variation>
    <location>
        <position position="85"/>
    </location>
</feature>
<feature type="sequence variant" id="VAR_010618" description="In XLHRD; dbSNP:rs1556014287." evidence="16">
    <original>C</original>
    <variation>R</variation>
    <location>
        <position position="85"/>
    </location>
</feature>
<feature type="sequence variant" id="VAR_006739" description="In XLHRD; dbSNP:rs137853269." evidence="15">
    <original>C</original>
    <variation>Y</variation>
    <location>
        <position position="85"/>
    </location>
</feature>
<feature type="sequence variant" id="VAR_006740" description="In XLHRD." evidence="14">
    <original>L</original>
    <variation>P</variation>
    <location>
        <position position="138"/>
    </location>
</feature>
<feature type="sequence variant" id="VAR_010619" description="In XLHRD; dbSNP:rs2147019252." evidence="6">
    <original>S</original>
    <variation>P</variation>
    <location>
        <position position="141"/>
    </location>
</feature>
<feature type="sequence variant" id="VAR_010620" description="In XLHRD; dbSNP:rs1064797048." evidence="5">
    <original>C</original>
    <variation>F</variation>
    <location>
        <position position="142"/>
    </location>
</feature>
<feature type="sequence variant" id="VAR_010621" description="In XLHRD." evidence="7">
    <original>L</original>
    <variation>R</variation>
    <location>
        <position position="160"/>
    </location>
</feature>
<feature type="sequence variant" id="VAR_006741" description="In XLHRD; dbSNP:rs751230094." evidence="15">
    <original>R</original>
    <variation>C</variation>
    <location>
        <position position="166"/>
    </location>
</feature>
<feature type="sequence variant" id="VAR_010622" description="In XLHRD." evidence="5">
    <original>D</original>
    <variation>G</variation>
    <location>
        <position position="237"/>
    </location>
</feature>
<feature type="sequence variant" id="VAR_006742" description="In XLHRD; dbSNP:rs267606945." evidence="15">
    <original>F</original>
    <variation>S</variation>
    <location>
        <position position="252"/>
    </location>
</feature>
<feature type="sequence variant" id="VAR_006743" description="In XLHRD; dbSNP:rs267606946." evidence="15">
    <original>M</original>
    <variation>I</variation>
    <location>
        <position position="253"/>
    </location>
</feature>
<feature type="sequence variant" id="VAR_010623" description="In XLHRD." evidence="19">
    <original>Y</original>
    <variation>F</variation>
    <location>
        <position position="317"/>
    </location>
</feature>
<feature type="sequence variant" id="VAR_010624" description="In XLHRD." evidence="6">
    <location>
        <position position="341"/>
    </location>
</feature>
<feature type="sequence variant" id="VAR_010625" description="In XLHRD." evidence="7">
    <original>W</original>
    <variation>WN</variation>
    <location>
        <position position="444"/>
    </location>
</feature>
<feature type="sequence variant" id="VAR_010626" description="In XLHRD; dbSNP:rs1556091855." evidence="5">
    <original>W</original>
    <variation>C</variation>
    <location>
        <position position="530"/>
    </location>
</feature>
<feature type="sequence variant" id="VAR_006744" description="In XLHRD; dbSNP:rs886041363." evidence="14 16 19">
    <original>P</original>
    <variation>L</variation>
    <location>
        <position position="534"/>
    </location>
</feature>
<feature type="sequence variant" id="VAR_010627" description="In XLHRD; dbSNP:rs137853270." evidence="18">
    <original>L</original>
    <variation>P</variation>
    <location>
        <position position="555"/>
    </location>
</feature>
<feature type="sequence variant" id="VAR_010628" description="In XLHRD; dbSNP:rs760870713." evidence="6">
    <original>R</original>
    <variation>P</variation>
    <location>
        <position position="567"/>
    </location>
</feature>
<feature type="sequence variant" id="VAR_010629" description="In XLHRD; dbSNP:rs1556135308." evidence="5">
    <original>A</original>
    <variation>D</variation>
    <location>
        <position position="573"/>
    </location>
</feature>
<feature type="sequence variant" id="VAR_006745" description="In XLHRD; dbSNP:rs875989883." evidence="14 16 19">
    <original>G</original>
    <variation>R</variation>
    <location>
        <position position="579"/>
    </location>
</feature>
<feature type="sequence variant" id="VAR_006746" description="In XLHRD; dbSNP:rs1057517980." evidence="15">
    <original>G</original>
    <variation>V</variation>
    <location>
        <position position="579"/>
    </location>
</feature>
<feature type="sequence variant" id="VAR_010630" description="In XLHRD." evidence="19">
    <original>Q</original>
    <variation>R</variation>
    <location>
        <position position="621"/>
    </location>
</feature>
<feature type="sequence variant" id="VAR_010631" description="In XLHRD; dbSNP:rs748792378." evidence="16">
    <original>R</original>
    <variation>P</variation>
    <location>
        <position position="651"/>
    </location>
</feature>
<feature type="sequence variant" id="VAR_010633" description="In XLHRD; dbSNP:rs1556151526." evidence="6">
    <original>N</original>
    <variation>K</variation>
    <location>
        <position position="680"/>
    </location>
</feature>
<feature type="sequence variant" id="VAR_010632" description="In XLHRD." evidence="19">
    <location>
        <position position="680"/>
    </location>
</feature>
<feature type="sequence variant" id="VAR_010634" description="In XLHRD; dbSNP:rs1556200989." evidence="6">
    <original>C</original>
    <variation>Y</variation>
    <location>
        <position position="693"/>
    </location>
</feature>
<feature type="sequence variant" id="VAR_010635" description="In XLHRD." evidence="19">
    <original>A</original>
    <variation>T</variation>
    <location>
        <position position="720"/>
    </location>
</feature>
<feature type="sequence variant" id="VAR_010636" description="In XLHRD." evidence="19">
    <original>F</original>
    <variation>Y</variation>
    <location>
        <position position="731"/>
    </location>
</feature>
<feature type="sequence variant" id="VAR_010637" description="In XLHRD; dbSNP:rs1057517981." evidence="5">
    <original>C</original>
    <variation>S</variation>
    <location>
        <position position="733"/>
    </location>
</feature>
<feature type="sequence variant" id="VAR_010638" description="In XLHRD." evidence="5">
    <original>C</original>
    <variation>W</variation>
    <location>
        <position position="746"/>
    </location>
</feature>
<feature type="sequence variant" id="VAR_010639" description="In XLHRD; dbSNP:rs1556206403." evidence="19">
    <original>W</original>
    <variation>R</variation>
    <location>
        <position position="749"/>
    </location>
</feature>
<feature type="sequence conflict" description="In Ref. 9; AAC50552." evidence="20" ref="9">
    <original>A</original>
    <variation>D</variation>
    <location>
        <position position="363"/>
    </location>
</feature>
<feature type="sequence conflict" description="In Ref. 9; AAC50552." evidence="20" ref="9">
    <original>W</original>
    <variation>R</variation>
    <location>
        <position position="403"/>
    </location>
</feature>
<feature type="sequence conflict" description="In Ref. 9; AAC50552." evidence="20" ref="9">
    <original>G</original>
    <variation>A</variation>
    <location>
        <position position="641"/>
    </location>
</feature>
<protein>
    <recommendedName>
        <fullName>Phosphate-regulating neutral endopeptidase PHEX</fullName>
        <ecNumber evidence="11 17">3.4.24.-</ecNumber>
    </recommendedName>
    <alternativeName>
        <fullName>Metalloendopeptidase homolog PEX</fullName>
    </alternativeName>
    <alternativeName>
        <fullName>Vitamin D-resistant hypophosphatemic rickets protein</fullName>
    </alternativeName>
    <alternativeName>
        <fullName>X-linked hypophosphatemia protein</fullName>
        <shortName>HYP</shortName>
    </alternativeName>
</protein>
<sequence length="749" mass="86474">MEAETGSSVETGKKANRGTRIALVVFVGGTLVLGTILFLVSQGLLSLQAKQEYCLKPECIEAAAAILSKVNLSVDPCDNFFRFACDGWISNNPIPEDMPSYGVYPWLRHNVDLKLKELLEKSISRRRDTEAIQKAKILYSSCMNEKAIEKADAKPLLHILRHSPFRWPVLESNIGPEGVWSERKFSLLQTLATFRGQYSNSVFIRLYVSPDDKASNEHILKLDQATLSLAVREDYLDNSTEAKSYRDALYKFMVDTAVLLGANSSRAEHDMKSVLRLEIKIAEIMIPHENRTSEAMYNKMNISELSAMIPQFDWLGYIKKVIDTRLYPHLKDISPSENVVVRVPQYFKDLFRILGSERKKTIANYLVWRMVYSRIPNLSRRFQYRWLEFSRVIQGTTTLLPQWDKCVNFIESALPYVVGKMFVDVYFQEDKKEMMEELVEGVRWAFIDMLEKENEWMDAGTKRKAKEKARAVLAKVGYPEFIMNDTHVNEDLKAIKFSEADYFGNVLQTRKYLAQSDFFWLRKAVPKTEWFTNPTTVNAFYSASTNQIRFPAGELQKPFFWGTEYPRSLSYGAIGVIVGHEFTHGFDNNGRKYDKNGNLDPWWSTESEEKFKEKTKCMINQYSNYYWKKAGLNVKGKRTLGENIADNGGLREAFRAYRKWINDRRQGLEEPLLPGITFTNNQLFFLSYAHVRCNSYRPEAAREQVQIGAHSPPQFRVNGAISNFEEFQKAFNCPPNSTMNRGMDSCRLW</sequence>
<proteinExistence type="evidence at protein level"/>